<comment type="function">
    <text evidence="1">Probable component of the endoplasmic reticulum-associated degradation (ERAD) pathway.</text>
</comment>
<comment type="similarity">
    <text evidence="3">Belongs to the LCL2 family.</text>
</comment>
<reference key="1">
    <citation type="journal article" date="2009" name="Nature">
        <title>Evolution of pathogenicity and sexual reproduction in eight Candida genomes.</title>
        <authorList>
            <person name="Butler G."/>
            <person name="Rasmussen M.D."/>
            <person name="Lin M.F."/>
            <person name="Santos M.A.S."/>
            <person name="Sakthikumar S."/>
            <person name="Munro C.A."/>
            <person name="Rheinbay E."/>
            <person name="Grabherr M."/>
            <person name="Forche A."/>
            <person name="Reedy J.L."/>
            <person name="Agrafioti I."/>
            <person name="Arnaud M.B."/>
            <person name="Bates S."/>
            <person name="Brown A.J.P."/>
            <person name="Brunke S."/>
            <person name="Costanzo M.C."/>
            <person name="Fitzpatrick D.A."/>
            <person name="de Groot P.W.J."/>
            <person name="Harris D."/>
            <person name="Hoyer L.L."/>
            <person name="Hube B."/>
            <person name="Klis F.M."/>
            <person name="Kodira C."/>
            <person name="Lennard N."/>
            <person name="Logue M.E."/>
            <person name="Martin R."/>
            <person name="Neiman A.M."/>
            <person name="Nikolaou E."/>
            <person name="Quail M.A."/>
            <person name="Quinn J."/>
            <person name="Santos M.C."/>
            <person name="Schmitzberger F.F."/>
            <person name="Sherlock G."/>
            <person name="Shah P."/>
            <person name="Silverstein K.A.T."/>
            <person name="Skrzypek M.S."/>
            <person name="Soll D."/>
            <person name="Staggs R."/>
            <person name="Stansfield I."/>
            <person name="Stumpf M.P.H."/>
            <person name="Sudbery P.E."/>
            <person name="Srikantha T."/>
            <person name="Zeng Q."/>
            <person name="Berman J."/>
            <person name="Berriman M."/>
            <person name="Heitman J."/>
            <person name="Gow N.A.R."/>
            <person name="Lorenz M.C."/>
            <person name="Birren B.W."/>
            <person name="Kellis M."/>
            <person name="Cuomo C.A."/>
        </authorList>
    </citation>
    <scope>NUCLEOTIDE SEQUENCE [LARGE SCALE GENOMIC DNA]</scope>
    <source>
        <strain>ATCC 6260 / CBS 566 / DSM 6381 / JCM 1539 / NBRC 10279 / NRRL Y-324</strain>
    </source>
</reference>
<dbReference type="EMBL" id="CH408160">
    <property type="protein sequence ID" value="EDK40962.1"/>
    <property type="molecule type" value="Genomic_DNA"/>
</dbReference>
<dbReference type="RefSeq" id="XP_001483105.1">
    <property type="nucleotide sequence ID" value="XM_001483055.1"/>
</dbReference>
<dbReference type="FunCoup" id="A5DP59">
    <property type="interactions" value="19"/>
</dbReference>
<dbReference type="STRING" id="294746.A5DP59"/>
<dbReference type="GeneID" id="5125055"/>
<dbReference type="KEGG" id="pgu:PGUG_05060"/>
<dbReference type="VEuPathDB" id="FungiDB:PGUG_05060"/>
<dbReference type="eggNOG" id="ENOG502S416">
    <property type="taxonomic scope" value="Eukaryota"/>
</dbReference>
<dbReference type="HOGENOM" id="CLU_142363_1_0_1"/>
<dbReference type="InParanoid" id="A5DP59"/>
<dbReference type="OMA" id="KPATHDE"/>
<dbReference type="OrthoDB" id="2234316at2759"/>
<dbReference type="Proteomes" id="UP000001997">
    <property type="component" value="Unassembled WGS sequence"/>
</dbReference>
<dbReference type="GO" id="GO:0036503">
    <property type="term" value="P:ERAD pathway"/>
    <property type="evidence" value="ECO:0007669"/>
    <property type="project" value="TreeGrafter"/>
</dbReference>
<dbReference type="CDD" id="cd23996">
    <property type="entry name" value="LCL2-like"/>
    <property type="match status" value="1"/>
</dbReference>
<dbReference type="InterPro" id="IPR034543">
    <property type="entry name" value="LCL2"/>
</dbReference>
<dbReference type="PANTHER" id="PTHR38425">
    <property type="entry name" value="LONG CHRONOLOGICAL LIFESPAN PROTEIN 2"/>
    <property type="match status" value="1"/>
</dbReference>
<dbReference type="PANTHER" id="PTHR38425:SF1">
    <property type="entry name" value="LONG CHRONOLOGICAL LIFESPAN PROTEIN 2"/>
    <property type="match status" value="1"/>
</dbReference>
<organism>
    <name type="scientific">Meyerozyma guilliermondii (strain ATCC 6260 / CBS 566 / DSM 6381 / JCM 1539 / NBRC 10279 / NRRL Y-324)</name>
    <name type="common">Yeast</name>
    <name type="synonym">Candida guilliermondii</name>
    <dbReference type="NCBI Taxonomy" id="294746"/>
    <lineage>
        <taxon>Eukaryota</taxon>
        <taxon>Fungi</taxon>
        <taxon>Dikarya</taxon>
        <taxon>Ascomycota</taxon>
        <taxon>Saccharomycotina</taxon>
        <taxon>Pichiomycetes</taxon>
        <taxon>Debaryomycetaceae</taxon>
        <taxon>Meyerozyma</taxon>
    </lineage>
</organism>
<protein>
    <recommendedName>
        <fullName>Long chronological lifespan protein 2</fullName>
    </recommendedName>
</protein>
<sequence length="127" mass="14122">MHLIYFLFLVVGCSASLFDFIQNQFGGGGQAQKSPEHYEAQVLNSNCDKYLCPGTSLCVDAPKFCPCPYPSSQLRCFLPDGRYLCISKPAGDVAANYDDPRTNWKVDAKDDNIRDCGWVSRAWKGVV</sequence>
<proteinExistence type="inferred from homology"/>
<name>LCL2_PICGU</name>
<evidence type="ECO:0000250" key="1"/>
<evidence type="ECO:0000255" key="2"/>
<evidence type="ECO:0000305" key="3"/>
<feature type="signal peptide" evidence="2">
    <location>
        <begin position="1"/>
        <end position="15"/>
    </location>
</feature>
<feature type="chain" id="PRO_0000408621" description="Long chronological lifespan protein 2">
    <location>
        <begin position="16"/>
        <end position="127"/>
    </location>
</feature>
<keyword id="KW-1185">Reference proteome</keyword>
<keyword id="KW-0732">Signal</keyword>
<gene>
    <name type="primary">LCL2</name>
    <name type="ORF">PGUG_05060</name>
</gene>
<accession>A5DP59</accession>